<organism>
    <name type="scientific">Haemophilus influenzae (strain ATCC 51907 / DSM 11121 / KW20 / Rd)</name>
    <dbReference type="NCBI Taxonomy" id="71421"/>
    <lineage>
        <taxon>Bacteria</taxon>
        <taxon>Pseudomonadati</taxon>
        <taxon>Pseudomonadota</taxon>
        <taxon>Gammaproteobacteria</taxon>
        <taxon>Pasteurellales</taxon>
        <taxon>Pasteurellaceae</taxon>
        <taxon>Haemophilus</taxon>
    </lineage>
</organism>
<name>HTPX_HAEIN</name>
<reference key="1">
    <citation type="journal article" date="1995" name="Science">
        <title>Whole-genome random sequencing and assembly of Haemophilus influenzae Rd.</title>
        <authorList>
            <person name="Fleischmann R.D."/>
            <person name="Adams M.D."/>
            <person name="White O."/>
            <person name="Clayton R.A."/>
            <person name="Kirkness E.F."/>
            <person name="Kerlavage A.R."/>
            <person name="Bult C.J."/>
            <person name="Tomb J.-F."/>
            <person name="Dougherty B.A."/>
            <person name="Merrick J.M."/>
            <person name="McKenney K."/>
            <person name="Sutton G.G."/>
            <person name="FitzHugh W."/>
            <person name="Fields C.A."/>
            <person name="Gocayne J.D."/>
            <person name="Scott J.D."/>
            <person name="Shirley R."/>
            <person name="Liu L.-I."/>
            <person name="Glodek A."/>
            <person name="Kelley J.M."/>
            <person name="Weidman J.F."/>
            <person name="Phillips C.A."/>
            <person name="Spriggs T."/>
            <person name="Hedblom E."/>
            <person name="Cotton M.D."/>
            <person name="Utterback T.R."/>
            <person name="Hanna M.C."/>
            <person name="Nguyen D.T."/>
            <person name="Saudek D.M."/>
            <person name="Brandon R.C."/>
            <person name="Fine L.D."/>
            <person name="Fritchman J.L."/>
            <person name="Fuhrmann J.L."/>
            <person name="Geoghagen N.S.M."/>
            <person name="Gnehm C.L."/>
            <person name="McDonald L.A."/>
            <person name="Small K.V."/>
            <person name="Fraser C.M."/>
            <person name="Smith H.O."/>
            <person name="Venter J.C."/>
        </authorList>
    </citation>
    <scope>NUCLEOTIDE SEQUENCE [LARGE SCALE GENOMIC DNA]</scope>
    <source>
        <strain>ATCC 51907 / DSM 11121 / KW20 / Rd</strain>
    </source>
</reference>
<comment type="cofactor">
    <cofactor evidence="1">
        <name>Zn(2+)</name>
        <dbReference type="ChEBI" id="CHEBI:29105"/>
    </cofactor>
    <text evidence="1">Binds 1 zinc ion per subunit.</text>
</comment>
<comment type="subcellular location">
    <subcellularLocation>
        <location evidence="1">Cell inner membrane</location>
        <topology evidence="1">Multi-pass membrane protein</topology>
    </subcellularLocation>
</comment>
<comment type="similarity">
    <text evidence="1">Belongs to the peptidase M48B family.</text>
</comment>
<gene>
    <name evidence="1" type="primary">htpX</name>
    <name type="ordered locus">HI_0720</name>
</gene>
<evidence type="ECO:0000255" key="1">
    <source>
        <dbReference type="HAMAP-Rule" id="MF_00188"/>
    </source>
</evidence>
<accession>P44840</accession>
<dbReference type="EC" id="3.4.24.-" evidence="1"/>
<dbReference type="EMBL" id="L42023">
    <property type="protein sequence ID" value="AAC22378.1"/>
    <property type="molecule type" value="Genomic_DNA"/>
</dbReference>
<dbReference type="PIR" id="H64088">
    <property type="entry name" value="H64088"/>
</dbReference>
<dbReference type="RefSeq" id="NP_438878.1">
    <property type="nucleotide sequence ID" value="NC_000907.1"/>
</dbReference>
<dbReference type="SMR" id="P44840"/>
<dbReference type="STRING" id="71421.HI_0720"/>
<dbReference type="MEROPS" id="M48.002"/>
<dbReference type="EnsemblBacteria" id="AAC22378">
    <property type="protein sequence ID" value="AAC22378"/>
    <property type="gene ID" value="HI_0720"/>
</dbReference>
<dbReference type="KEGG" id="hin:HI_0720"/>
<dbReference type="PATRIC" id="fig|71421.8.peg.752"/>
<dbReference type="eggNOG" id="COG0501">
    <property type="taxonomic scope" value="Bacteria"/>
</dbReference>
<dbReference type="HOGENOM" id="CLU_042266_1_0_6"/>
<dbReference type="OrthoDB" id="15218at2"/>
<dbReference type="PhylomeDB" id="P44840"/>
<dbReference type="BioCyc" id="HINF71421:G1GJ1-754-MONOMER"/>
<dbReference type="Proteomes" id="UP000000579">
    <property type="component" value="Chromosome"/>
</dbReference>
<dbReference type="GO" id="GO:0005886">
    <property type="term" value="C:plasma membrane"/>
    <property type="evidence" value="ECO:0007669"/>
    <property type="project" value="UniProtKB-SubCell"/>
</dbReference>
<dbReference type="GO" id="GO:0004222">
    <property type="term" value="F:metalloendopeptidase activity"/>
    <property type="evidence" value="ECO:0007669"/>
    <property type="project" value="UniProtKB-UniRule"/>
</dbReference>
<dbReference type="GO" id="GO:0008270">
    <property type="term" value="F:zinc ion binding"/>
    <property type="evidence" value="ECO:0007669"/>
    <property type="project" value="UniProtKB-UniRule"/>
</dbReference>
<dbReference type="GO" id="GO:0006508">
    <property type="term" value="P:proteolysis"/>
    <property type="evidence" value="ECO:0007669"/>
    <property type="project" value="UniProtKB-KW"/>
</dbReference>
<dbReference type="CDD" id="cd07335">
    <property type="entry name" value="M48B_HtpX_like"/>
    <property type="match status" value="1"/>
</dbReference>
<dbReference type="FunFam" id="3.30.2010.10:FF:000001">
    <property type="entry name" value="Protease HtpX"/>
    <property type="match status" value="1"/>
</dbReference>
<dbReference type="Gene3D" id="3.30.2010.10">
    <property type="entry name" value="Metalloproteases ('zincins'), catalytic domain"/>
    <property type="match status" value="1"/>
</dbReference>
<dbReference type="HAMAP" id="MF_00188">
    <property type="entry name" value="Pept_M48_protease_HtpX"/>
    <property type="match status" value="1"/>
</dbReference>
<dbReference type="InterPro" id="IPR050083">
    <property type="entry name" value="HtpX_protease"/>
</dbReference>
<dbReference type="InterPro" id="IPR022919">
    <property type="entry name" value="Pept_M48_protease_HtpX"/>
</dbReference>
<dbReference type="InterPro" id="IPR001915">
    <property type="entry name" value="Peptidase_M48"/>
</dbReference>
<dbReference type="NCBIfam" id="NF003965">
    <property type="entry name" value="PRK05457.1"/>
    <property type="match status" value="1"/>
</dbReference>
<dbReference type="PANTHER" id="PTHR43221">
    <property type="entry name" value="PROTEASE HTPX"/>
    <property type="match status" value="1"/>
</dbReference>
<dbReference type="PANTHER" id="PTHR43221:SF1">
    <property type="entry name" value="PROTEASE HTPX"/>
    <property type="match status" value="1"/>
</dbReference>
<dbReference type="Pfam" id="PF01435">
    <property type="entry name" value="Peptidase_M48"/>
    <property type="match status" value="1"/>
</dbReference>
<dbReference type="PROSITE" id="PS00142">
    <property type="entry name" value="ZINC_PROTEASE"/>
    <property type="match status" value="1"/>
</dbReference>
<sequence length="283" mass="30780">MMRILLFLATNMAVMLVLGIILSVTGIAGNSTGGILIMALLFGFAGSLISLFLSKTMALRSVDGEVITQPRNQTERWLIDTVSRQAQKAGIPMPDVAIYHSPDVNAFATGATKSNSLVAVSTGLLNNMTEAEAEAVLAHEISHISNGDMVTMALLQGVLNTFVIFLSRVIATAVASSRNNNGEETRSSGIYFLVSMVLEMLFGVLASIIAMWFSRYREFRADAGSASLVGKEKMIMALQRLQQLHEPQNLEGSLNAFMINGKRSELFMSHPPLEKRIEALRNL</sequence>
<feature type="chain" id="PRO_0000138865" description="Protease HtpX">
    <location>
        <begin position="1"/>
        <end position="283"/>
    </location>
</feature>
<feature type="transmembrane region" description="Helical" evidence="1">
    <location>
        <begin position="4"/>
        <end position="24"/>
    </location>
</feature>
<feature type="transmembrane region" description="Helical" evidence="1">
    <location>
        <begin position="33"/>
        <end position="53"/>
    </location>
</feature>
<feature type="transmembrane region" description="Helical" evidence="1">
    <location>
        <begin position="147"/>
        <end position="167"/>
    </location>
</feature>
<feature type="transmembrane region" description="Helical" evidence="1">
    <location>
        <begin position="190"/>
        <end position="210"/>
    </location>
</feature>
<feature type="active site" evidence="1">
    <location>
        <position position="140"/>
    </location>
</feature>
<feature type="binding site" evidence="1">
    <location>
        <position position="139"/>
    </location>
    <ligand>
        <name>Zn(2+)</name>
        <dbReference type="ChEBI" id="CHEBI:29105"/>
        <note>catalytic</note>
    </ligand>
</feature>
<feature type="binding site" evidence="1">
    <location>
        <position position="143"/>
    </location>
    <ligand>
        <name>Zn(2+)</name>
        <dbReference type="ChEBI" id="CHEBI:29105"/>
        <note>catalytic</note>
    </ligand>
</feature>
<feature type="binding site" evidence="1">
    <location>
        <position position="218"/>
    </location>
    <ligand>
        <name>Zn(2+)</name>
        <dbReference type="ChEBI" id="CHEBI:29105"/>
        <note>catalytic</note>
    </ligand>
</feature>
<proteinExistence type="inferred from homology"/>
<protein>
    <recommendedName>
        <fullName evidence="1">Protease HtpX</fullName>
        <ecNumber evidence="1">3.4.24.-</ecNumber>
    </recommendedName>
    <alternativeName>
        <fullName evidence="1">Heat shock protein HtpX</fullName>
    </alternativeName>
</protein>
<keyword id="KW-0997">Cell inner membrane</keyword>
<keyword id="KW-1003">Cell membrane</keyword>
<keyword id="KW-0378">Hydrolase</keyword>
<keyword id="KW-0472">Membrane</keyword>
<keyword id="KW-0479">Metal-binding</keyword>
<keyword id="KW-0482">Metalloprotease</keyword>
<keyword id="KW-0645">Protease</keyword>
<keyword id="KW-1185">Reference proteome</keyword>
<keyword id="KW-0812">Transmembrane</keyword>
<keyword id="KW-1133">Transmembrane helix</keyword>
<keyword id="KW-0862">Zinc</keyword>